<gene>
    <name evidence="1" type="primary">atpC</name>
    <name type="ordered locus">SpyM51226</name>
</gene>
<sequence length="138" mass="15510">MTQMTVQVVTPDGIKYDHHAKCISVTTPDGEMGILPNHINLIAPLQVHEMKIRRGGEDEKVDWIAINGGIIEIKDNVVTIVADSAERDRDIDVSRAERAKLRAEREIAQAETTHNIDEVRRAKVALRRALNRINVSKK</sequence>
<organism>
    <name type="scientific">Streptococcus pyogenes serotype M5 (strain Manfredo)</name>
    <dbReference type="NCBI Taxonomy" id="160491"/>
    <lineage>
        <taxon>Bacteria</taxon>
        <taxon>Bacillati</taxon>
        <taxon>Bacillota</taxon>
        <taxon>Bacilli</taxon>
        <taxon>Lactobacillales</taxon>
        <taxon>Streptococcaceae</taxon>
        <taxon>Streptococcus</taxon>
    </lineage>
</organism>
<reference key="1">
    <citation type="journal article" date="2007" name="J. Bacteriol.">
        <title>Complete genome of acute rheumatic fever-associated serotype M5 Streptococcus pyogenes strain Manfredo.</title>
        <authorList>
            <person name="Holden M.T.G."/>
            <person name="Scott A."/>
            <person name="Cherevach I."/>
            <person name="Chillingworth T."/>
            <person name="Churcher C."/>
            <person name="Cronin A."/>
            <person name="Dowd L."/>
            <person name="Feltwell T."/>
            <person name="Hamlin N."/>
            <person name="Holroyd S."/>
            <person name="Jagels K."/>
            <person name="Moule S."/>
            <person name="Mungall K."/>
            <person name="Quail M.A."/>
            <person name="Price C."/>
            <person name="Rabbinowitsch E."/>
            <person name="Sharp S."/>
            <person name="Skelton J."/>
            <person name="Whitehead S."/>
            <person name="Barrell B.G."/>
            <person name="Kehoe M."/>
            <person name="Parkhill J."/>
        </authorList>
    </citation>
    <scope>NUCLEOTIDE SEQUENCE [LARGE SCALE GENOMIC DNA]</scope>
    <source>
        <strain>Manfredo</strain>
    </source>
</reference>
<keyword id="KW-0066">ATP synthesis</keyword>
<keyword id="KW-1003">Cell membrane</keyword>
<keyword id="KW-0139">CF(1)</keyword>
<keyword id="KW-0375">Hydrogen ion transport</keyword>
<keyword id="KW-0406">Ion transport</keyword>
<keyword id="KW-0472">Membrane</keyword>
<keyword id="KW-0813">Transport</keyword>
<evidence type="ECO:0000255" key="1">
    <source>
        <dbReference type="HAMAP-Rule" id="MF_00530"/>
    </source>
</evidence>
<accession>A2RFC1</accession>
<proteinExistence type="inferred from homology"/>
<feature type="chain" id="PRO_1000056541" description="ATP synthase epsilon chain">
    <location>
        <begin position="1"/>
        <end position="138"/>
    </location>
</feature>
<comment type="function">
    <text evidence="1">Produces ATP from ADP in the presence of a proton gradient across the membrane.</text>
</comment>
<comment type="subunit">
    <text evidence="1">F-type ATPases have 2 components, CF(1) - the catalytic core - and CF(0) - the membrane proton channel. CF(1) has five subunits: alpha(3), beta(3), gamma(1), delta(1), epsilon(1). CF(0) has three main subunits: a, b and c.</text>
</comment>
<comment type="subcellular location">
    <subcellularLocation>
        <location evidence="1">Cell membrane</location>
        <topology evidence="1">Peripheral membrane protein</topology>
    </subcellularLocation>
</comment>
<comment type="similarity">
    <text evidence="1">Belongs to the ATPase epsilon chain family.</text>
</comment>
<protein>
    <recommendedName>
        <fullName evidence="1">ATP synthase epsilon chain</fullName>
    </recommendedName>
    <alternativeName>
        <fullName evidence="1">ATP synthase F1 sector epsilon subunit</fullName>
    </alternativeName>
    <alternativeName>
        <fullName evidence="1">F-ATPase epsilon subunit</fullName>
    </alternativeName>
</protein>
<dbReference type="EMBL" id="AM295007">
    <property type="protein sequence ID" value="CAM30550.1"/>
    <property type="molecule type" value="Genomic_DNA"/>
</dbReference>
<dbReference type="RefSeq" id="WP_002994425.1">
    <property type="nucleotide sequence ID" value="NC_009332.1"/>
</dbReference>
<dbReference type="SMR" id="A2RFC1"/>
<dbReference type="KEGG" id="spf:SpyM51226"/>
<dbReference type="HOGENOM" id="CLU_084338_1_0_9"/>
<dbReference type="GO" id="GO:0005886">
    <property type="term" value="C:plasma membrane"/>
    <property type="evidence" value="ECO:0007669"/>
    <property type="project" value="UniProtKB-SubCell"/>
</dbReference>
<dbReference type="GO" id="GO:0045259">
    <property type="term" value="C:proton-transporting ATP synthase complex"/>
    <property type="evidence" value="ECO:0007669"/>
    <property type="project" value="UniProtKB-KW"/>
</dbReference>
<dbReference type="GO" id="GO:0005524">
    <property type="term" value="F:ATP binding"/>
    <property type="evidence" value="ECO:0007669"/>
    <property type="project" value="UniProtKB-UniRule"/>
</dbReference>
<dbReference type="GO" id="GO:0046933">
    <property type="term" value="F:proton-transporting ATP synthase activity, rotational mechanism"/>
    <property type="evidence" value="ECO:0007669"/>
    <property type="project" value="UniProtKB-UniRule"/>
</dbReference>
<dbReference type="CDD" id="cd12152">
    <property type="entry name" value="F1-ATPase_delta"/>
    <property type="match status" value="1"/>
</dbReference>
<dbReference type="Gene3D" id="1.20.5.440">
    <property type="entry name" value="ATP synthase delta/epsilon subunit, C-terminal domain"/>
    <property type="match status" value="1"/>
</dbReference>
<dbReference type="Gene3D" id="2.60.15.10">
    <property type="entry name" value="F0F1 ATP synthase delta/epsilon subunit, N-terminal"/>
    <property type="match status" value="1"/>
</dbReference>
<dbReference type="HAMAP" id="MF_00530">
    <property type="entry name" value="ATP_synth_epsil_bac"/>
    <property type="match status" value="1"/>
</dbReference>
<dbReference type="InterPro" id="IPR001469">
    <property type="entry name" value="ATP_synth_F1_dsu/esu"/>
</dbReference>
<dbReference type="InterPro" id="IPR020546">
    <property type="entry name" value="ATP_synth_F1_dsu/esu_N"/>
</dbReference>
<dbReference type="InterPro" id="IPR020547">
    <property type="entry name" value="ATP_synth_F1_esu_C"/>
</dbReference>
<dbReference type="InterPro" id="IPR036771">
    <property type="entry name" value="ATPsynth_dsu/esu_N"/>
</dbReference>
<dbReference type="NCBIfam" id="TIGR01216">
    <property type="entry name" value="ATP_synt_epsi"/>
    <property type="match status" value="1"/>
</dbReference>
<dbReference type="NCBIfam" id="NF001846">
    <property type="entry name" value="PRK00571.1-3"/>
    <property type="match status" value="1"/>
</dbReference>
<dbReference type="PANTHER" id="PTHR13822">
    <property type="entry name" value="ATP SYNTHASE DELTA/EPSILON CHAIN"/>
    <property type="match status" value="1"/>
</dbReference>
<dbReference type="PANTHER" id="PTHR13822:SF10">
    <property type="entry name" value="ATP SYNTHASE EPSILON CHAIN, CHLOROPLASTIC"/>
    <property type="match status" value="1"/>
</dbReference>
<dbReference type="Pfam" id="PF00401">
    <property type="entry name" value="ATP-synt_DE"/>
    <property type="match status" value="1"/>
</dbReference>
<dbReference type="Pfam" id="PF02823">
    <property type="entry name" value="ATP-synt_DE_N"/>
    <property type="match status" value="1"/>
</dbReference>
<dbReference type="SUPFAM" id="SSF51344">
    <property type="entry name" value="Epsilon subunit of F1F0-ATP synthase N-terminal domain"/>
    <property type="match status" value="1"/>
</dbReference>
<name>ATPE_STRPG</name>